<comment type="function">
    <text evidence="1">Involved in the organization of myofibers. Together with KRT8, helps to link the contractile apparatus to dystrophin at the costameres of striated muscle (By similarity).</text>
</comment>
<comment type="subunit">
    <text evidence="1">Heterotetramer of two type I and two type II keratins. Interacts with PNN and the actin-binding domain of DMD (By similarity).</text>
</comment>
<comment type="domain">
    <text evidence="5">This keratin differs from all other IF proteins in lacking the C-terminal tail domain.</text>
</comment>
<comment type="miscellaneous">
    <text evidence="5">There are two types of cytoskeletal and microfibrillar keratin: I (acidic; 40-55 kDa) and II (neutral to basic; 56-70 kDa).</text>
</comment>
<comment type="similarity">
    <text evidence="4">Belongs to the intermediate filament family.</text>
</comment>
<proteinExistence type="evidence at protein level"/>
<accession>P86246</accession>
<gene>
    <name evidence="1" type="primary">KRT19</name>
</gene>
<name>K1C19_MESAU</name>
<evidence type="ECO:0000250" key="1">
    <source>
        <dbReference type="UniProtKB" id="P08727"/>
    </source>
</evidence>
<evidence type="ECO:0000250" key="2">
    <source>
        <dbReference type="UniProtKB" id="Q63279"/>
    </source>
</evidence>
<evidence type="ECO:0000255" key="3"/>
<evidence type="ECO:0000255" key="4">
    <source>
        <dbReference type="PROSITE-ProRule" id="PRU01188"/>
    </source>
</evidence>
<evidence type="ECO:0000305" key="5"/>
<keyword id="KW-0175">Coiled coil</keyword>
<keyword id="KW-0403">Intermediate filament</keyword>
<keyword id="KW-0416">Keratin</keyword>
<keyword id="KW-0488">Methylation</keyword>
<keyword id="KW-0597">Phosphoprotein</keyword>
<keyword id="KW-1185">Reference proteome</keyword>
<organism>
    <name type="scientific">Mesocricetus auratus</name>
    <name type="common">Golden hamster</name>
    <dbReference type="NCBI Taxonomy" id="10036"/>
    <lineage>
        <taxon>Eukaryota</taxon>
        <taxon>Metazoa</taxon>
        <taxon>Chordata</taxon>
        <taxon>Craniata</taxon>
        <taxon>Vertebrata</taxon>
        <taxon>Euteleostomi</taxon>
        <taxon>Mammalia</taxon>
        <taxon>Eutheria</taxon>
        <taxon>Euarchontoglires</taxon>
        <taxon>Glires</taxon>
        <taxon>Rodentia</taxon>
        <taxon>Myomorpha</taxon>
        <taxon>Muroidea</taxon>
        <taxon>Cricetidae</taxon>
        <taxon>Cricetinae</taxon>
        <taxon>Mesocricetus</taxon>
    </lineage>
</organism>
<reference key="1">
    <citation type="journal article" date="2010" name="Asian J. Androl.">
        <title>Glucose-regulated protein precursor (GRP78) and tumor rejection antigen (GP96) are unique to hamster caput epididymal spermatozoa.</title>
        <authorList>
            <person name="Kameshwari D.B."/>
            <person name="Bhande S."/>
            <person name="Sundaram C.S."/>
            <person name="Kota V."/>
            <person name="Siva A.B."/>
            <person name="Shivaji S."/>
        </authorList>
    </citation>
    <scope>IDENTIFICATION BY MASS SPECTROMETRY</scope>
</reference>
<sequence>FGSGGVFRITMQNLNDRLASYLDKVRALEQANGELEVKIRDWYQKIVLQIDNARTKFETEQALRVLDELTLARKNHEEEISALRADTERQNQEYQQLMDIKLEQEIATYR</sequence>
<protein>
    <recommendedName>
        <fullName evidence="1">Keratin, type I cytoskeletal 19</fullName>
    </recommendedName>
    <alternativeName>
        <fullName evidence="1">Cytokeratin-19</fullName>
        <shortName evidence="1">CK-19</shortName>
    </alternativeName>
    <alternativeName>
        <fullName evidence="1">Keratin-19</fullName>
        <shortName evidence="1">K19</shortName>
    </alternativeName>
</protein>
<feature type="chain" id="PRO_0000394418" description="Keratin, type I cytoskeletal 19">
    <location>
        <begin position="1" status="less than"/>
        <end position="110" status="greater than"/>
    </location>
</feature>
<feature type="domain" description="IF rod" evidence="4">
    <location>
        <begin position="7"/>
        <end position="110" status="greater than"/>
    </location>
</feature>
<feature type="region of interest" description="Head" evidence="3">
    <location>
        <begin position="1" status="less than"/>
        <end position="8" status="greater than"/>
    </location>
</feature>
<feature type="region of interest" description="Coil 1A" evidence="3">
    <location>
        <begin position="9" status="less than"/>
        <end position="42"/>
    </location>
</feature>
<feature type="region of interest" description="Linker 1" evidence="3">
    <location>
        <begin position="43"/>
        <end position="45" status="greater than"/>
    </location>
</feature>
<feature type="region of interest" description="Coil 1B" evidence="3">
    <location>
        <begin position="46" status="less than"/>
        <end position="83"/>
    </location>
</feature>
<feature type="region of interest" description="Coil 2" evidence="3">
    <location>
        <begin position="85" status="less than"/>
        <end position="110" status="greater than"/>
    </location>
</feature>
<feature type="region of interest" description="Necessary for interaction with PNN" evidence="1">
    <location>
        <begin position="85" status="less than"/>
        <end position="110" status="greater than"/>
    </location>
</feature>
<feature type="modified residue" description="Phosphoserine" evidence="2">
    <location>
        <position position="3"/>
    </location>
</feature>
<feature type="modified residue" description="Omega-N-methylarginine" evidence="1">
    <location>
        <position position="8"/>
    </location>
</feature>
<feature type="non-consecutive residues" evidence="5">
    <location>
        <begin position="8"/>
        <end position="9"/>
    </location>
</feature>
<feature type="non-consecutive residues" evidence="5">
    <location>
        <begin position="45"/>
        <end position="46"/>
    </location>
</feature>
<feature type="non-consecutive residues" evidence="5">
    <location>
        <begin position="54"/>
        <end position="55"/>
    </location>
</feature>
<feature type="non-consecutive residues" evidence="5">
    <location>
        <begin position="64"/>
        <end position="65"/>
    </location>
</feature>
<feature type="non-consecutive residues" evidence="5">
    <location>
        <begin position="73"/>
        <end position="74"/>
    </location>
</feature>
<feature type="non-consecutive residues" evidence="5">
    <location>
        <begin position="84"/>
        <end position="85"/>
    </location>
</feature>
<feature type="non-consecutive residues" evidence="5">
    <location>
        <begin position="101"/>
        <end position="102"/>
    </location>
</feature>
<feature type="non-terminal residue">
    <location>
        <position position="1"/>
    </location>
</feature>
<feature type="non-terminal residue">
    <location>
        <position position="110"/>
    </location>
</feature>
<dbReference type="SMR" id="P86246"/>
<dbReference type="STRING" id="10036.ENSMAUP00000012225"/>
<dbReference type="Proteomes" id="UP000189706">
    <property type="component" value="Unplaced"/>
</dbReference>
<dbReference type="GO" id="GO:0005882">
    <property type="term" value="C:intermediate filament"/>
    <property type="evidence" value="ECO:0007669"/>
    <property type="project" value="UniProtKB-KW"/>
</dbReference>
<dbReference type="GO" id="GO:0005198">
    <property type="term" value="F:structural molecule activity"/>
    <property type="evidence" value="ECO:0007669"/>
    <property type="project" value="InterPro"/>
</dbReference>
<dbReference type="GO" id="GO:0030855">
    <property type="term" value="P:epithelial cell differentiation"/>
    <property type="evidence" value="ECO:0007669"/>
    <property type="project" value="TreeGrafter"/>
</dbReference>
<dbReference type="GO" id="GO:0045109">
    <property type="term" value="P:intermediate filament organization"/>
    <property type="evidence" value="ECO:0007669"/>
    <property type="project" value="TreeGrafter"/>
</dbReference>
<dbReference type="Gene3D" id="1.20.5.170">
    <property type="match status" value="1"/>
</dbReference>
<dbReference type="InterPro" id="IPR039008">
    <property type="entry name" value="IF_rod_dom"/>
</dbReference>
<dbReference type="InterPro" id="IPR002957">
    <property type="entry name" value="Keratin_I"/>
</dbReference>
<dbReference type="PANTHER" id="PTHR23239">
    <property type="entry name" value="INTERMEDIATE FILAMENT"/>
    <property type="match status" value="1"/>
</dbReference>
<dbReference type="PANTHER" id="PTHR23239:SF14">
    <property type="entry name" value="KERATIN, TYPE I CYTOSKELETAL 19"/>
    <property type="match status" value="1"/>
</dbReference>
<dbReference type="Pfam" id="PF00038">
    <property type="entry name" value="Filament"/>
    <property type="match status" value="1"/>
</dbReference>
<dbReference type="SUPFAM" id="SSF64593">
    <property type="entry name" value="Intermediate filament protein, coiled coil region"/>
    <property type="match status" value="2"/>
</dbReference>
<dbReference type="PROSITE" id="PS51842">
    <property type="entry name" value="IF_ROD_2"/>
    <property type="match status" value="1"/>
</dbReference>